<organism>
    <name type="scientific">Caenorhabditis elegans</name>
    <dbReference type="NCBI Taxonomy" id="6239"/>
    <lineage>
        <taxon>Eukaryota</taxon>
        <taxon>Metazoa</taxon>
        <taxon>Ecdysozoa</taxon>
        <taxon>Nematoda</taxon>
        <taxon>Chromadorea</taxon>
        <taxon>Rhabditida</taxon>
        <taxon>Rhabditina</taxon>
        <taxon>Rhabditomorpha</taxon>
        <taxon>Rhabditoidea</taxon>
        <taxon>Rhabditidae</taxon>
        <taxon>Peloderinae</taxon>
        <taxon>Caenorhabditis</taxon>
    </lineage>
</organism>
<reference key="1">
    <citation type="journal article" date="2008" name="Proc. Natl. Acad. Sci. U.S.A.">
        <title>CASY-1, an ortholog of calsyntenins/alcadeins, is essential for learning in Caenorhabditis elegans.</title>
        <authorList>
            <person name="Ikeda D.D."/>
            <person name="Duan Y."/>
            <person name="Matsuki M."/>
            <person name="Kunitomo H."/>
            <person name="Hutter H."/>
            <person name="Hedgecock E.M."/>
            <person name="Iino Y."/>
        </authorList>
    </citation>
    <scope>NUCLEOTIDE SEQUENCE [MRNA] (ISOFORM A)</scope>
    <scope>FUNCTION</scope>
    <scope>DISRUPTION PHENOTYPE</scope>
    <scope>TISSUE SPECIFICITY</scope>
    <scope>PROTEOLYTIC CLEAVAGE</scope>
</reference>
<reference key="2">
    <citation type="journal article" date="1998" name="Science">
        <title>Genome sequence of the nematode C. elegans: a platform for investigating biology.</title>
        <authorList>
            <consortium name="The C. elegans sequencing consortium"/>
        </authorList>
    </citation>
    <scope>NUCLEOTIDE SEQUENCE [LARGE SCALE GENOMIC DNA]</scope>
    <source>
        <strain>Bristol N2</strain>
    </source>
</reference>
<reference key="3">
    <citation type="journal article" date="2009" name="PLoS ONE">
        <title>A conserved function of C. elegans CASY-1 calsyntenin in associative learning.</title>
        <authorList>
            <person name="Hoerndli F.J."/>
            <person name="Walser M."/>
            <person name="Froehli Hoier E."/>
            <person name="de Quervain D."/>
            <person name="Papassotiropoulos A."/>
            <person name="Hajnal A."/>
        </authorList>
    </citation>
    <scope>FUNCTION</scope>
    <scope>DISRUPTION PHENOTYPE</scope>
</reference>
<reference key="4">
    <citation type="journal article" date="2014" name="Science">
        <title>Role of synaptic phosphatidylinositol 3-kinase in a behavioral learning response in C. elegans.</title>
        <authorList>
            <person name="Ohno H."/>
            <person name="Kato S."/>
            <person name="Naito Y."/>
            <person name="Kunitomo H."/>
            <person name="Tomioka M."/>
            <person name="Iino Y."/>
        </authorList>
    </citation>
    <scope>FUNCTION</scope>
    <scope>SUBCELLULAR LOCATION</scope>
    <scope>INTERACTION WITH KLC-2 AND DAF-2</scope>
</reference>
<reference key="5">
    <citation type="journal article" date="2018" name="Genetics">
        <title>Regulation of glutamate signaling in the sensorimotor circuit by CASY-1A/calsyntenin in Caenorhabditis elegans.</title>
        <authorList>
            <person name="Thapliyal S."/>
            <person name="Ravindranath S."/>
            <person name="Babu K."/>
        </authorList>
    </citation>
    <scope>FUNCTION</scope>
    <scope>DISRUPTION PHENOTYPE</scope>
</reference>
<reference key="6">
    <citation type="journal article" date="2018" name="PLoS Genet.">
        <title>The C-terminal of CASY-1/Calsyntenin regulates GABAergic synaptic transmission at the Caenorhabditis elegans neuromuscular junction.</title>
        <authorList>
            <person name="Thapliyal S."/>
            <person name="Vasudevan A."/>
            <person name="Dong Y."/>
            <person name="Bai J."/>
            <person name="Koushika S.P."/>
            <person name="Babu K."/>
        </authorList>
    </citation>
    <scope>FUNCTION (ISOFORM A)</scope>
    <scope>SUBCELLULAR LOCATION</scope>
    <scope>PROTEOLYTIC CLEAVAGE</scope>
    <scope>INTERACTION WITH UNC-104</scope>
    <scope>DISRUPTION PHENOTYPE</scope>
</reference>
<gene>
    <name evidence="10 12" type="primary">casy-1</name>
    <name evidence="12" type="ORF">B0034.3</name>
</gene>
<sequence length="984" mass="109261">MRTAYFIFVGALLGVSYAKHHHAARAPIINLQGAEELVAVVREDENIISTVPDFAILSETGPVCNYLLTSQNNEPVPFDIQVVDKYTGAAVLRVKDAATLDCKKPEYNLQVQAVKCDNDNVKSEGVSLKIRVKDTNNHAPEIENPWYTFHVEEGKVVEEVGVLKASDKDCGHPNGEICEYEITNGLKELPFAINNHGVLRTTQPLNFTQSKSYILTVVAIDCAMRKSKSSLVTVHVDEKCVQGITAMNERVNYAPGVGSKLLLPDVSLEFCEKETICEPKSVQSVIELRAGHVTQGCARDTVYDNQTIQSCGLSTATVKLLNEEALTSSAENQILADQGIEFDGARGVTVSDENHQGLIPDHFTLSFSMKHAAGTKDEQSNKQNILCESDDFNMNRHHFSVYIRHCKLEVVLRREAGATSDFRAAEWRWSMPEVCDNEWHSYSLLFNGIDDVNVIVDGKSFKADERNPEILDDWPLHKTKATKTKLVVGACWHGRQQKLAQFFRGQLSSLYLLSGAVESERAIKCAHTCPEQLQFTGVDELLESQSATFSPDQTSLTLKAETSKQIGQMLKRVAYVNTQEKPAPGHRVFLVETEVTCKQDDKKMKLPSSKGYVFVQQAAEPTLSISASSQLKSNQHMVKVGQAMVPDLTITISQNNADGELEDVTQSHKIDYCKMHLQPARDMDVEYFSSPASLIAALNIEFEHDKDGILLRGEESAQGYKEVLSKVHYFNTRPESYAKRVYTVQCAMLKGRVLSNQLFVTMTIDGVTTTTSTTTEAPAPAQPDPIQFNFNSGETALDSLELIERHFEPAFDQLGSSRLQNILEMDLPRPKALLSHHGYDVGQGAIAGGAVAVVVVVCVGFLLVLLVIGVLKMRDTPMPRRRRQKRQSDGGMHWDDSGMNITVNPLDDVEKNGGAIDEFSDEEEEEETDGESECSYRDEEDDVSEDEEDQTEVLPHLDANQRVVGGLEWDDEDAISTNARSYRV</sequence>
<protein>
    <recommendedName>
        <fullName evidence="10">Calsyntenin-1</fullName>
    </recommendedName>
    <component>
        <recommendedName>
            <fullName evidence="11">Secreted calsyntenin-1</fullName>
        </recommendedName>
    </component>
</protein>
<feature type="signal peptide" evidence="1">
    <location>
        <begin position="1"/>
        <end position="18"/>
    </location>
</feature>
<feature type="chain" id="PRO_5015091937" description="Calsyntenin-1" evidence="1">
    <location>
        <begin position="19"/>
        <end position="984"/>
    </location>
</feature>
<feature type="chain" id="PRO_0000458040" description="Secreted calsyntenin-1">
    <location>
        <begin position="19"/>
        <end status="unknown"/>
    </location>
</feature>
<feature type="topological domain" description="Extracellular" evidence="11">
    <location>
        <begin position="19"/>
        <end position="850"/>
    </location>
</feature>
<feature type="transmembrane region" description="Helical" evidence="1">
    <location>
        <begin position="851"/>
        <end position="871"/>
    </location>
</feature>
<feature type="topological domain" description="Cytoplasmic" evidence="11">
    <location>
        <begin position="872"/>
        <end position="984"/>
    </location>
</feature>
<feature type="domain" description="Cadherin 1" evidence="2">
    <location>
        <begin position="66"/>
        <end position="142"/>
    </location>
</feature>
<feature type="domain" description="Cadherin 2" evidence="2">
    <location>
        <begin position="143"/>
        <end position="257"/>
    </location>
</feature>
<feature type="region of interest" description="Disordered" evidence="4">
    <location>
        <begin position="878"/>
        <end position="959"/>
    </location>
</feature>
<feature type="compositionally biased region" description="Basic and acidic residues" evidence="4">
    <location>
        <begin position="886"/>
        <end position="896"/>
    </location>
</feature>
<feature type="compositionally biased region" description="Acidic residues" evidence="4">
    <location>
        <begin position="918"/>
        <end position="951"/>
    </location>
</feature>
<feature type="glycosylation site" description="N-linked (GlcNAc...) asparagine" evidence="3">
    <location>
        <position position="206"/>
    </location>
</feature>
<feature type="glycosylation site" description="N-linked (GlcNAc...) asparagine" evidence="3">
    <location>
        <position position="305"/>
    </location>
</feature>
<feature type="splice variant" id="VSP_061886" description="In isoform c.">
    <location>
        <begin position="1"/>
        <end position="824"/>
    </location>
</feature>
<feature type="splice variant" id="VSP_061887" description="In isoform b.">
    <original>MRTAYFIFVGALLGVSYAKHHHAARAPIINLQGAEELVAVVREDENIISTVPDFAILSETGPVCNYLLTSQNNEPVPFDIQVVDKYTGAAVLRVKDAATLDCKKPEYNLQVQAVKCDNDNVKSEGVSLKIRVKDTNNHAPEIENPWYTFHVEEGKVVEEVGVLKASDKDCGHPNGEICEYEITNGLKELPFAINNHGVLRTTQPLNFTQSKSYILTVVAIDCAMRKSKSSLVTVHVDEKCVQGITAMNERVNYAPGVGSKLLLPDVSLEFCEKETICEPKSVQSVIELRAGHVTQGCARDTVYDNQTIQSCGLSTATVKLLNEEALTSSAENQILADQGIEFDGARGVTVSDENHQGLIPDHFTLSFSMKHAAGTKDEQSNKQNILCESDDFNMNRHHFSVYIRHCKLEVVLRREAGATSDFRAAEWRWSMPEVCDNEWHSYSLLFNGIDDVNVIVDGKSFKADERNPEILDDWPLHKTKATKTKLVVGACWHGRQQKLAQFFRGQLSSLYLLSGAVESERAIKCAHTCPEQLQFTGVDELLESQSATFSPDQTSLTLKAETSKQIGQMLKRVAYVNTQEKPAPGHRVFLVETEVTCKQDDKKMKLPSSKGYVFVQQAAEPTLSISASSQLKSNQHMVKVGQAMVPDLTITISQNNADGELEDVTQSHKIDYCKMHLQPARDMDVEYFSSPASLIAALNIEFEHDKDGILLRGEESAQGYKEVLSKVHYFNTRPESYAKRVYTVQCAMLKGRVLSNQLFVTMTIDGVTTTTSTTTEAPAPAQPDPIQFNFNSGETALDSLELIERHFEPAFDQLGSSRLQ</original>
    <variation>MFV</variation>
    <location>
        <begin position="1"/>
        <end position="820"/>
    </location>
</feature>
<name>CASY1_CAEEL</name>
<proteinExistence type="evidence at protein level"/>
<keyword id="KW-0025">Alternative splicing</keyword>
<keyword id="KW-0106">Calcium</keyword>
<keyword id="KW-0130">Cell adhesion</keyword>
<keyword id="KW-0966">Cell projection</keyword>
<keyword id="KW-0325">Glycoprotein</keyword>
<keyword id="KW-0333">Golgi apparatus</keyword>
<keyword id="KW-0472">Membrane</keyword>
<keyword id="KW-1185">Reference proteome</keyword>
<keyword id="KW-0677">Repeat</keyword>
<keyword id="KW-0964">Secreted</keyword>
<keyword id="KW-0732">Signal</keyword>
<keyword id="KW-0770">Synapse</keyword>
<keyword id="KW-0812">Transmembrane</keyword>
<keyword id="KW-1133">Transmembrane helix</keyword>
<dbReference type="EMBL" id="AY091591">
    <property type="protein sequence ID" value="AAM00045.1"/>
    <property type="molecule type" value="mRNA"/>
</dbReference>
<dbReference type="EMBL" id="BX284602">
    <property type="protein sequence ID" value="CCD61228.1"/>
    <property type="molecule type" value="Genomic_DNA"/>
</dbReference>
<dbReference type="EMBL" id="BX284602">
    <property type="protein sequence ID" value="CCD61230.1"/>
    <property type="molecule type" value="Genomic_DNA"/>
</dbReference>
<dbReference type="EMBL" id="BX284602">
    <property type="protein sequence ID" value="CCD61229.1"/>
    <property type="molecule type" value="Genomic_DNA"/>
</dbReference>
<dbReference type="RefSeq" id="NP_001021110.1">
    <molecule id="G5ED46-1"/>
    <property type="nucleotide sequence ID" value="NM_001025939.7"/>
</dbReference>
<dbReference type="RefSeq" id="NP_001040722.1">
    <molecule id="G5ED46-2"/>
    <property type="nucleotide sequence ID" value="NM_001047257.6"/>
</dbReference>
<dbReference type="RefSeq" id="NP_495189.2">
    <molecule id="G5ED46-3"/>
    <property type="nucleotide sequence ID" value="NM_062788.7"/>
</dbReference>
<dbReference type="SMR" id="G5ED46"/>
<dbReference type="FunCoup" id="G5ED46">
    <property type="interactions" value="993"/>
</dbReference>
<dbReference type="IntAct" id="G5ED46">
    <property type="interactions" value="2"/>
</dbReference>
<dbReference type="STRING" id="6239.B0034.3a.1"/>
<dbReference type="PaxDb" id="6239-B0034.3a"/>
<dbReference type="PeptideAtlas" id="G5ED46"/>
<dbReference type="EnsemblMetazoa" id="B0034.3a.1">
    <molecule id="G5ED46-1"/>
    <property type="protein sequence ID" value="B0034.3a.1"/>
    <property type="gene ID" value="WBGene00000403"/>
</dbReference>
<dbReference type="EnsemblMetazoa" id="B0034.3b.1">
    <molecule id="G5ED46-3"/>
    <property type="protein sequence ID" value="B0034.3b.1"/>
    <property type="gene ID" value="WBGene00000403"/>
</dbReference>
<dbReference type="EnsemblMetazoa" id="B0034.3c.1">
    <molecule id="G5ED46-2"/>
    <property type="protein sequence ID" value="B0034.3c.1"/>
    <property type="gene ID" value="WBGene00000403"/>
</dbReference>
<dbReference type="GeneID" id="174006"/>
<dbReference type="KEGG" id="cel:CELE_B0034.3"/>
<dbReference type="UCSC" id="B0034.3c.1">
    <property type="organism name" value="c. elegans"/>
</dbReference>
<dbReference type="AGR" id="WB:WBGene00000403"/>
<dbReference type="CTD" id="174006"/>
<dbReference type="WormBase" id="B0034.3a">
    <molecule id="G5ED46-1"/>
    <property type="protein sequence ID" value="CE27048"/>
    <property type="gene ID" value="WBGene00000403"/>
    <property type="gene designation" value="casy-1"/>
</dbReference>
<dbReference type="WormBase" id="B0034.3b">
    <molecule id="G5ED46-3"/>
    <property type="protein sequence ID" value="CE27049"/>
    <property type="gene ID" value="WBGene00000403"/>
    <property type="gene designation" value="casy-1"/>
</dbReference>
<dbReference type="WormBase" id="B0034.3c">
    <molecule id="G5ED46-2"/>
    <property type="protein sequence ID" value="CE39540"/>
    <property type="gene ID" value="WBGene00000403"/>
    <property type="gene designation" value="casy-1"/>
</dbReference>
<dbReference type="eggNOG" id="KOG1834">
    <property type="taxonomic scope" value="Eukaryota"/>
</dbReference>
<dbReference type="GeneTree" id="ENSGT00950000183086"/>
<dbReference type="HOGENOM" id="CLU_008904_0_0_1"/>
<dbReference type="InParanoid" id="G5ED46"/>
<dbReference type="OMA" id="YTVQCAM"/>
<dbReference type="OrthoDB" id="10012272at2759"/>
<dbReference type="PRO" id="PR:G5ED46"/>
<dbReference type="Proteomes" id="UP000001940">
    <property type="component" value="Chromosome II"/>
</dbReference>
<dbReference type="Bgee" id="WBGene00000403">
    <property type="expression patterns" value="Expressed in pharyngeal muscle cell (C elegans) and 3 other cell types or tissues"/>
</dbReference>
<dbReference type="ExpressionAtlas" id="G5ED46">
    <property type="expression patterns" value="baseline and differential"/>
</dbReference>
<dbReference type="GO" id="GO:0030424">
    <property type="term" value="C:axon"/>
    <property type="evidence" value="ECO:0000314"/>
    <property type="project" value="WormBase"/>
</dbReference>
<dbReference type="GO" id="GO:0009986">
    <property type="term" value="C:cell surface"/>
    <property type="evidence" value="ECO:0000318"/>
    <property type="project" value="GO_Central"/>
</dbReference>
<dbReference type="GO" id="GO:0005615">
    <property type="term" value="C:extracellular space"/>
    <property type="evidence" value="ECO:0000314"/>
    <property type="project" value="WormBase"/>
</dbReference>
<dbReference type="GO" id="GO:0005794">
    <property type="term" value="C:Golgi apparatus"/>
    <property type="evidence" value="ECO:0000314"/>
    <property type="project" value="WormBase"/>
</dbReference>
<dbReference type="GO" id="GO:0000139">
    <property type="term" value="C:Golgi membrane"/>
    <property type="evidence" value="ECO:0007669"/>
    <property type="project" value="UniProtKB-SubCell"/>
</dbReference>
<dbReference type="GO" id="GO:0043231">
    <property type="term" value="C:intracellular membrane-bounded organelle"/>
    <property type="evidence" value="ECO:0000314"/>
    <property type="project" value="WormBase"/>
</dbReference>
<dbReference type="GO" id="GO:0031594">
    <property type="term" value="C:neuromuscular junction"/>
    <property type="evidence" value="ECO:0000314"/>
    <property type="project" value="UniProtKB"/>
</dbReference>
<dbReference type="GO" id="GO:0043025">
    <property type="term" value="C:neuronal cell body"/>
    <property type="evidence" value="ECO:0000314"/>
    <property type="project" value="WormBase"/>
</dbReference>
<dbReference type="GO" id="GO:0032809">
    <property type="term" value="C:neuronal cell body membrane"/>
    <property type="evidence" value="ECO:0000314"/>
    <property type="project" value="WormBase"/>
</dbReference>
<dbReference type="GO" id="GO:0043204">
    <property type="term" value="C:perikaryon"/>
    <property type="evidence" value="ECO:0007669"/>
    <property type="project" value="UniProtKB-SubCell"/>
</dbReference>
<dbReference type="GO" id="GO:0045211">
    <property type="term" value="C:postsynaptic membrane"/>
    <property type="evidence" value="ECO:0000318"/>
    <property type="project" value="GO_Central"/>
</dbReference>
<dbReference type="GO" id="GO:0043083">
    <property type="term" value="C:synaptic cleft"/>
    <property type="evidence" value="ECO:0000314"/>
    <property type="project" value="UniProtKB"/>
</dbReference>
<dbReference type="GO" id="GO:0005509">
    <property type="term" value="F:calcium ion binding"/>
    <property type="evidence" value="ECO:0007669"/>
    <property type="project" value="InterPro"/>
</dbReference>
<dbReference type="GO" id="GO:0008306">
    <property type="term" value="P:associative learning"/>
    <property type="evidence" value="ECO:0000315"/>
    <property type="project" value="UniProtKB"/>
</dbReference>
<dbReference type="GO" id="GO:0007156">
    <property type="term" value="P:homophilic cell adhesion via plasma membrane adhesion molecules"/>
    <property type="evidence" value="ECO:0007669"/>
    <property type="project" value="InterPro"/>
</dbReference>
<dbReference type="GO" id="GO:0008355">
    <property type="term" value="P:olfactory learning"/>
    <property type="evidence" value="ECO:0000315"/>
    <property type="project" value="WormBase"/>
</dbReference>
<dbReference type="GO" id="GO:0051965">
    <property type="term" value="P:positive regulation of synapse assembly"/>
    <property type="evidence" value="ECO:0000318"/>
    <property type="project" value="GO_Central"/>
</dbReference>
<dbReference type="GO" id="GO:0050806">
    <property type="term" value="P:positive regulation of synaptic transmission"/>
    <property type="evidence" value="ECO:0000318"/>
    <property type="project" value="GO_Central"/>
</dbReference>
<dbReference type="GO" id="GO:1902805">
    <property type="term" value="P:positive regulation of synaptic vesicle transport"/>
    <property type="evidence" value="ECO:0000314"/>
    <property type="project" value="UniProtKB"/>
</dbReference>
<dbReference type="GO" id="GO:0051966">
    <property type="term" value="P:regulation of synaptic transmission, glutamatergic"/>
    <property type="evidence" value="ECO:0000315"/>
    <property type="project" value="UniProtKB"/>
</dbReference>
<dbReference type="GO" id="GO:0051932">
    <property type="term" value="P:synaptic transmission, GABAergic"/>
    <property type="evidence" value="ECO:0000314"/>
    <property type="project" value="UniProtKB"/>
</dbReference>
<dbReference type="CDD" id="cd11304">
    <property type="entry name" value="Cadherin_repeat"/>
    <property type="match status" value="2"/>
</dbReference>
<dbReference type="FunFam" id="2.60.120.200:FF:000260">
    <property type="entry name" value="CAlSYntenin/Alcadein homolog"/>
    <property type="match status" value="1"/>
</dbReference>
<dbReference type="FunFam" id="2.60.40.60:FF:000352">
    <property type="entry name" value="CAlSYntenin/Alcadein homolog"/>
    <property type="match status" value="1"/>
</dbReference>
<dbReference type="Gene3D" id="2.60.120.200">
    <property type="match status" value="1"/>
</dbReference>
<dbReference type="Gene3D" id="2.60.40.60">
    <property type="entry name" value="Cadherins"/>
    <property type="match status" value="2"/>
</dbReference>
<dbReference type="InterPro" id="IPR002126">
    <property type="entry name" value="Cadherin-like_dom"/>
</dbReference>
<dbReference type="InterPro" id="IPR015919">
    <property type="entry name" value="Cadherin-like_sf"/>
</dbReference>
<dbReference type="InterPro" id="IPR045588">
    <property type="entry name" value="CLSTN_C"/>
</dbReference>
<dbReference type="InterPro" id="IPR013320">
    <property type="entry name" value="ConA-like_dom_sf"/>
</dbReference>
<dbReference type="PANTHER" id="PTHR14139">
    <property type="entry name" value="CALSYNTENIN"/>
    <property type="match status" value="1"/>
</dbReference>
<dbReference type="PANTHER" id="PTHR14139:SF2">
    <property type="entry name" value="CALSYNTENIN-1"/>
    <property type="match status" value="1"/>
</dbReference>
<dbReference type="Pfam" id="PF00028">
    <property type="entry name" value="Cadherin"/>
    <property type="match status" value="1"/>
</dbReference>
<dbReference type="Pfam" id="PF19699">
    <property type="entry name" value="CLSTN_C"/>
    <property type="match status" value="2"/>
</dbReference>
<dbReference type="PRINTS" id="PR00205">
    <property type="entry name" value="CADHERIN"/>
</dbReference>
<dbReference type="SMART" id="SM00112">
    <property type="entry name" value="CA"/>
    <property type="match status" value="2"/>
</dbReference>
<dbReference type="SUPFAM" id="SSF49313">
    <property type="entry name" value="Cadherin-like"/>
    <property type="match status" value="1"/>
</dbReference>
<dbReference type="SUPFAM" id="SSF49899">
    <property type="entry name" value="Concanavalin A-like lectins/glucanases"/>
    <property type="match status" value="1"/>
</dbReference>
<dbReference type="PROSITE" id="PS50268">
    <property type="entry name" value="CADHERIN_2"/>
    <property type="match status" value="2"/>
</dbReference>
<comment type="function">
    <text evidence="5 6 7 9">Cell adhesion molecule involved in associative learning and memory (PubMed:18381821, PubMed:19287492, PubMed:25035490, PubMed:29529030). Acts as a regulator of GABAergic synaptic transmission at neuromuscular junctions by regulating GABA synaptic vesicle precursor transport: possibly functions as a cargo adapter for unc-104-mediated transport of synaptic vesicle precursors (PubMed:29529030). Promotes localization of isoform c of daf-2 (daf-2c) to synaptic regions by acting as a signaling adapter between klc-2 and daf-2c (PubMed:25035490).</text>
</comment>
<comment type="function">
    <molecule>Isoform a</molecule>
    <text evidence="8">Acts as aregulator of glutamate signaling in the sensory neurons by inhibiting the activity of command interneurons, thereby negatively regulating motor circuit activity and locomotion.</text>
</comment>
<comment type="subunit">
    <text evidence="7 8">Interacts with isoform c of daf-2 (daf-2c); promoting daf-2c localization to synaptic regions (PubMed:25035490). Interacts with klc-2 (PubMed:25035490). Interacts with unc-104 (PubMed:29475851).</text>
</comment>
<comment type="subcellular location">
    <subcellularLocation>
        <location evidence="7">Golgi apparatus membrane</location>
        <topology evidence="1">Single-pass type I membrane protein</topology>
    </subcellularLocation>
    <subcellularLocation>
        <location evidence="5 7">Perikaryon</location>
    </subcellularLocation>
    <subcellularLocation>
        <location evidence="7">Cell projection</location>
        <location evidence="7">Axon</location>
    </subcellularLocation>
</comment>
<comment type="subcellular location">
    <molecule>Secreted calsyntenin-1</molecule>
    <subcellularLocation>
        <location evidence="5">Secreted</location>
    </subcellularLocation>
    <subcellularLocation>
        <location evidence="9">Synaptic cleft</location>
    </subcellularLocation>
    <text evidence="5">Released in the extracellular space following proteolytic cleavage.</text>
</comment>
<comment type="alternative products">
    <event type="alternative splicing"/>
    <isoform>
        <id>G5ED46-1</id>
        <name>a</name>
        <sequence type="displayed"/>
    </isoform>
    <isoform>
        <id>G5ED46-2</id>
        <name>c</name>
        <sequence type="described" ref="VSP_061886"/>
    </isoform>
    <isoform>
        <id>G5ED46-3</id>
        <name>b</name>
        <sequence type="described" ref="VSP_061887"/>
    </isoform>
</comment>
<comment type="tissue specificity">
    <text evidence="5">Widely expressed in the nervous system (PubMed:18381821). Highly expressed in many head neurons, including most amphid sensory neurons (PubMed:18381821). Also expressed in other tissues, such as intestine and gonadal sheath cells (PubMed:18381821).</text>
</comment>
<comment type="PTM">
    <text evidence="5 9">A proportion of the protein is proteolytically cleaved before the transmembrane domain in neurons, leading to release in the extracellular space.</text>
</comment>
<comment type="disruption phenotype">
    <text evidence="5 6 8 9">Defects in associative learning, such as temperature learning, olfactory adaptation and integration of two sensory signals (PubMed:18381821, PubMed:19287492). Mutants display hyperactive sensory neurons, resulting in accelerated locomotion and motor circuit activity (PubMed:29475851). Worms show a reduced number of GABA vesicles at the synapse resulting in less GABA release from the presynaptic GABAergic motor neurons (PubMed:29529030).</text>
</comment>
<comment type="similarity">
    <text evidence="11">Belongs to the calsyntenin family.</text>
</comment>
<evidence type="ECO:0000255" key="1"/>
<evidence type="ECO:0000255" key="2">
    <source>
        <dbReference type="PROSITE-ProRule" id="PRU00043"/>
    </source>
</evidence>
<evidence type="ECO:0000255" key="3">
    <source>
        <dbReference type="PROSITE-ProRule" id="PRU00498"/>
    </source>
</evidence>
<evidence type="ECO:0000256" key="4">
    <source>
        <dbReference type="SAM" id="MobiDB-lite"/>
    </source>
</evidence>
<evidence type="ECO:0000269" key="5">
    <source>
    </source>
</evidence>
<evidence type="ECO:0000269" key="6">
    <source>
    </source>
</evidence>
<evidence type="ECO:0000269" key="7">
    <source>
    </source>
</evidence>
<evidence type="ECO:0000269" key="8">
    <source>
    </source>
</evidence>
<evidence type="ECO:0000269" key="9">
    <source>
    </source>
</evidence>
<evidence type="ECO:0000303" key="10">
    <source>
    </source>
</evidence>
<evidence type="ECO:0000305" key="11"/>
<evidence type="ECO:0000312" key="12">
    <source>
        <dbReference type="WormBase" id="B0034.3a"/>
    </source>
</evidence>
<accession>G5ED46</accession>
<accession>H2KY57</accession>
<accession>Q2L6X9</accession>